<keyword id="KW-0488">Methylation</keyword>
<keyword id="KW-1185">Reference proteome</keyword>
<keyword id="KW-0687">Ribonucleoprotein</keyword>
<keyword id="KW-0689">Ribosomal protein</keyword>
<keyword id="KW-0694">RNA-binding</keyword>
<keyword id="KW-0699">rRNA-binding</keyword>
<accession>Q32AF5</accession>
<dbReference type="EMBL" id="CP000034">
    <property type="protein sequence ID" value="ABB63700.1"/>
    <property type="molecule type" value="Genomic_DNA"/>
</dbReference>
<dbReference type="RefSeq" id="WP_001085926.1">
    <property type="nucleotide sequence ID" value="NC_007606.1"/>
</dbReference>
<dbReference type="RefSeq" id="YP_405191.1">
    <property type="nucleotide sequence ID" value="NC_007606.1"/>
</dbReference>
<dbReference type="SMR" id="Q32AF5"/>
<dbReference type="STRING" id="300267.SDY_3745"/>
<dbReference type="EnsemblBacteria" id="ABB63700">
    <property type="protein sequence ID" value="ABB63700"/>
    <property type="gene ID" value="SDY_3745"/>
</dbReference>
<dbReference type="GeneID" id="93777911"/>
<dbReference type="KEGG" id="sdy:SDY_3745"/>
<dbReference type="PATRIC" id="fig|300267.13.peg.4440"/>
<dbReference type="HOGENOM" id="CLU_074237_2_0_6"/>
<dbReference type="Proteomes" id="UP000002716">
    <property type="component" value="Chromosome"/>
</dbReference>
<dbReference type="GO" id="GO:0022625">
    <property type="term" value="C:cytosolic large ribosomal subunit"/>
    <property type="evidence" value="ECO:0007669"/>
    <property type="project" value="TreeGrafter"/>
</dbReference>
<dbReference type="GO" id="GO:0070180">
    <property type="term" value="F:large ribosomal subunit rRNA binding"/>
    <property type="evidence" value="ECO:0007669"/>
    <property type="project" value="UniProtKB-UniRule"/>
</dbReference>
<dbReference type="GO" id="GO:0003735">
    <property type="term" value="F:structural constituent of ribosome"/>
    <property type="evidence" value="ECO:0007669"/>
    <property type="project" value="InterPro"/>
</dbReference>
<dbReference type="GO" id="GO:0006412">
    <property type="term" value="P:translation"/>
    <property type="evidence" value="ECO:0007669"/>
    <property type="project" value="UniProtKB-UniRule"/>
</dbReference>
<dbReference type="CDD" id="cd00349">
    <property type="entry name" value="Ribosomal_L11"/>
    <property type="match status" value="1"/>
</dbReference>
<dbReference type="FunFam" id="1.10.10.250:FF:000001">
    <property type="entry name" value="50S ribosomal protein L11"/>
    <property type="match status" value="1"/>
</dbReference>
<dbReference type="FunFam" id="3.30.1550.10:FF:000001">
    <property type="entry name" value="50S ribosomal protein L11"/>
    <property type="match status" value="1"/>
</dbReference>
<dbReference type="Gene3D" id="1.10.10.250">
    <property type="entry name" value="Ribosomal protein L11, C-terminal domain"/>
    <property type="match status" value="1"/>
</dbReference>
<dbReference type="Gene3D" id="3.30.1550.10">
    <property type="entry name" value="Ribosomal protein L11/L12, N-terminal domain"/>
    <property type="match status" value="1"/>
</dbReference>
<dbReference type="HAMAP" id="MF_00736">
    <property type="entry name" value="Ribosomal_uL11"/>
    <property type="match status" value="1"/>
</dbReference>
<dbReference type="InterPro" id="IPR000911">
    <property type="entry name" value="Ribosomal_uL11"/>
</dbReference>
<dbReference type="InterPro" id="IPR006519">
    <property type="entry name" value="Ribosomal_uL11_bac-typ"/>
</dbReference>
<dbReference type="InterPro" id="IPR020783">
    <property type="entry name" value="Ribosomal_uL11_C"/>
</dbReference>
<dbReference type="InterPro" id="IPR036769">
    <property type="entry name" value="Ribosomal_uL11_C_sf"/>
</dbReference>
<dbReference type="InterPro" id="IPR020785">
    <property type="entry name" value="Ribosomal_uL11_CS"/>
</dbReference>
<dbReference type="InterPro" id="IPR020784">
    <property type="entry name" value="Ribosomal_uL11_N"/>
</dbReference>
<dbReference type="InterPro" id="IPR036796">
    <property type="entry name" value="Ribosomal_uL11_N_sf"/>
</dbReference>
<dbReference type="NCBIfam" id="TIGR01632">
    <property type="entry name" value="L11_bact"/>
    <property type="match status" value="1"/>
</dbReference>
<dbReference type="PANTHER" id="PTHR11661">
    <property type="entry name" value="60S RIBOSOMAL PROTEIN L12"/>
    <property type="match status" value="1"/>
</dbReference>
<dbReference type="PANTHER" id="PTHR11661:SF1">
    <property type="entry name" value="LARGE RIBOSOMAL SUBUNIT PROTEIN UL11M"/>
    <property type="match status" value="1"/>
</dbReference>
<dbReference type="Pfam" id="PF00298">
    <property type="entry name" value="Ribosomal_L11"/>
    <property type="match status" value="1"/>
</dbReference>
<dbReference type="Pfam" id="PF03946">
    <property type="entry name" value="Ribosomal_L11_N"/>
    <property type="match status" value="1"/>
</dbReference>
<dbReference type="SMART" id="SM00649">
    <property type="entry name" value="RL11"/>
    <property type="match status" value="1"/>
</dbReference>
<dbReference type="SUPFAM" id="SSF54747">
    <property type="entry name" value="Ribosomal L11/L12e N-terminal domain"/>
    <property type="match status" value="1"/>
</dbReference>
<dbReference type="SUPFAM" id="SSF46906">
    <property type="entry name" value="Ribosomal protein L11, C-terminal domain"/>
    <property type="match status" value="1"/>
</dbReference>
<dbReference type="PROSITE" id="PS00359">
    <property type="entry name" value="RIBOSOMAL_L11"/>
    <property type="match status" value="1"/>
</dbReference>
<comment type="function">
    <text evidence="2">Forms part of the ribosomal stalk which helps the ribosome interact with GTP-bound translation factors.</text>
</comment>
<comment type="subunit">
    <text evidence="2">Part of the ribosomal stalk of the 50S ribosomal subunit. Interacts with L10 and the large rRNA to form the base of the stalk. L10 forms an elongated spine to which L12 dimers bind in a sequential fashion forming a multimeric L10(L12)X complex.</text>
</comment>
<comment type="PTM">
    <text evidence="2">One or more lysine residues are methylated.</text>
</comment>
<comment type="similarity">
    <text evidence="2">Belongs to the universal ribosomal protein uL11 family.</text>
</comment>
<reference key="1">
    <citation type="journal article" date="2005" name="Nucleic Acids Res.">
        <title>Genome dynamics and diversity of Shigella species, the etiologic agents of bacillary dysentery.</title>
        <authorList>
            <person name="Yang F."/>
            <person name="Yang J."/>
            <person name="Zhang X."/>
            <person name="Chen L."/>
            <person name="Jiang Y."/>
            <person name="Yan Y."/>
            <person name="Tang X."/>
            <person name="Wang J."/>
            <person name="Xiong Z."/>
            <person name="Dong J."/>
            <person name="Xue Y."/>
            <person name="Zhu Y."/>
            <person name="Xu X."/>
            <person name="Sun L."/>
            <person name="Chen S."/>
            <person name="Nie H."/>
            <person name="Peng J."/>
            <person name="Xu J."/>
            <person name="Wang Y."/>
            <person name="Yuan Z."/>
            <person name="Wen Y."/>
            <person name="Yao Z."/>
            <person name="Shen Y."/>
            <person name="Qiang B."/>
            <person name="Hou Y."/>
            <person name="Yu J."/>
            <person name="Jin Q."/>
        </authorList>
    </citation>
    <scope>NUCLEOTIDE SEQUENCE [LARGE SCALE GENOMIC DNA]</scope>
    <source>
        <strain>Sd197</strain>
    </source>
</reference>
<protein>
    <recommendedName>
        <fullName evidence="2">Large ribosomal subunit protein uL11</fullName>
    </recommendedName>
    <alternativeName>
        <fullName evidence="3">50S ribosomal protein L11</fullName>
    </alternativeName>
</protein>
<feature type="initiator methionine" description="Removed" evidence="1">
    <location>
        <position position="1"/>
    </location>
</feature>
<feature type="chain" id="PRO_0000258212" description="Large ribosomal subunit protein uL11">
    <location>
        <begin position="2"/>
        <end position="142"/>
    </location>
</feature>
<name>RL11_SHIDS</name>
<gene>
    <name evidence="2" type="primary">rplK</name>
    <name type="ordered locus">SDY_3745</name>
</gene>
<sequence>MAKKVQAYVKLQVAAGMANPSPPVGPALGQQGVNIMEFCKAFNAKTDSIEKGLPIPVVITVYADRSFTFVTKTPPAAVLLKKAAGIKSGSGKPNKDKVGKISRAQLQEIAQTKAADMTGADIEAMTRSIEGTARSMGLVVED</sequence>
<organism>
    <name type="scientific">Shigella dysenteriae serotype 1 (strain Sd197)</name>
    <dbReference type="NCBI Taxonomy" id="300267"/>
    <lineage>
        <taxon>Bacteria</taxon>
        <taxon>Pseudomonadati</taxon>
        <taxon>Pseudomonadota</taxon>
        <taxon>Gammaproteobacteria</taxon>
        <taxon>Enterobacterales</taxon>
        <taxon>Enterobacteriaceae</taxon>
        <taxon>Shigella</taxon>
    </lineage>
</organism>
<proteinExistence type="inferred from homology"/>
<evidence type="ECO:0000250" key="1"/>
<evidence type="ECO:0000255" key="2">
    <source>
        <dbReference type="HAMAP-Rule" id="MF_00736"/>
    </source>
</evidence>
<evidence type="ECO:0000305" key="3"/>